<gene>
    <name evidence="1" type="primary">rpl15</name>
    <name type="ordered locus">Tpen_0234</name>
</gene>
<reference key="1">
    <citation type="journal article" date="2008" name="J. Bacteriol.">
        <title>Genome sequence of Thermofilum pendens reveals an exceptional loss of biosynthetic pathways without genome reduction.</title>
        <authorList>
            <person name="Anderson I."/>
            <person name="Rodriguez J."/>
            <person name="Susanti D."/>
            <person name="Porat I."/>
            <person name="Reich C."/>
            <person name="Ulrich L.E."/>
            <person name="Elkins J.G."/>
            <person name="Mavromatis K."/>
            <person name="Lykidis A."/>
            <person name="Kim E."/>
            <person name="Thompson L.S."/>
            <person name="Nolan M."/>
            <person name="Land M."/>
            <person name="Copeland A."/>
            <person name="Lapidus A."/>
            <person name="Lucas S."/>
            <person name="Detter C."/>
            <person name="Zhulin I.B."/>
            <person name="Olsen G.J."/>
            <person name="Whitman W."/>
            <person name="Mukhopadhyay B."/>
            <person name="Bristow J."/>
            <person name="Kyrpides N."/>
        </authorList>
    </citation>
    <scope>NUCLEOTIDE SEQUENCE [LARGE SCALE GENOMIC DNA]</scope>
    <source>
        <strain>DSM 2475 / Hrk 5</strain>
    </source>
</reference>
<comment type="function">
    <text evidence="1">Binds to the 23S rRNA.</text>
</comment>
<comment type="subunit">
    <text evidence="1">Part of the 50S ribosomal subunit.</text>
</comment>
<comment type="similarity">
    <text evidence="1">Belongs to the universal ribosomal protein uL15 family.</text>
</comment>
<proteinExistence type="inferred from homology"/>
<organism>
    <name type="scientific">Thermofilum pendens (strain DSM 2475 / Hrk 5)</name>
    <dbReference type="NCBI Taxonomy" id="368408"/>
    <lineage>
        <taxon>Archaea</taxon>
        <taxon>Thermoproteota</taxon>
        <taxon>Thermoprotei</taxon>
        <taxon>Thermofilales</taxon>
        <taxon>Thermofilaceae</taxon>
        <taxon>Thermofilum</taxon>
    </lineage>
</organism>
<feature type="chain" id="PRO_1000067670" description="Large ribosomal subunit protein uL15">
    <location>
        <begin position="1"/>
        <end position="151"/>
    </location>
</feature>
<feature type="region of interest" description="Disordered" evidence="2">
    <location>
        <begin position="1"/>
        <end position="33"/>
    </location>
</feature>
<feature type="compositionally biased region" description="Basic residues" evidence="2">
    <location>
        <begin position="1"/>
        <end position="14"/>
    </location>
</feature>
<protein>
    <recommendedName>
        <fullName evidence="1">Large ribosomal subunit protein uL15</fullName>
    </recommendedName>
    <alternativeName>
        <fullName evidence="3">50S ribosomal protein L15</fullName>
    </alternativeName>
</protein>
<accession>A1RWR4</accession>
<dbReference type="EMBL" id="CP000505">
    <property type="protein sequence ID" value="ABL77644.1"/>
    <property type="molecule type" value="Genomic_DNA"/>
</dbReference>
<dbReference type="SMR" id="A1RWR4"/>
<dbReference type="STRING" id="368408.Tpen_0234"/>
<dbReference type="EnsemblBacteria" id="ABL77644">
    <property type="protein sequence ID" value="ABL77644"/>
    <property type="gene ID" value="Tpen_0234"/>
</dbReference>
<dbReference type="KEGG" id="tpe:Tpen_0234"/>
<dbReference type="eggNOG" id="arCOG00779">
    <property type="taxonomic scope" value="Archaea"/>
</dbReference>
<dbReference type="HOGENOM" id="CLU_109163_0_0_2"/>
<dbReference type="OrthoDB" id="9418at2157"/>
<dbReference type="Proteomes" id="UP000000641">
    <property type="component" value="Chromosome"/>
</dbReference>
<dbReference type="GO" id="GO:0022625">
    <property type="term" value="C:cytosolic large ribosomal subunit"/>
    <property type="evidence" value="ECO:0007669"/>
    <property type="project" value="TreeGrafter"/>
</dbReference>
<dbReference type="GO" id="GO:0019843">
    <property type="term" value="F:rRNA binding"/>
    <property type="evidence" value="ECO:0007669"/>
    <property type="project" value="UniProtKB-UniRule"/>
</dbReference>
<dbReference type="GO" id="GO:0003735">
    <property type="term" value="F:structural constituent of ribosome"/>
    <property type="evidence" value="ECO:0007669"/>
    <property type="project" value="InterPro"/>
</dbReference>
<dbReference type="GO" id="GO:0006412">
    <property type="term" value="P:translation"/>
    <property type="evidence" value="ECO:0007669"/>
    <property type="project" value="UniProtKB-UniRule"/>
</dbReference>
<dbReference type="Gene3D" id="3.100.10.10">
    <property type="match status" value="1"/>
</dbReference>
<dbReference type="Gene3D" id="4.10.990.10">
    <property type="match status" value="1"/>
</dbReference>
<dbReference type="HAMAP" id="MF_01341">
    <property type="entry name" value="Ribosomal_uL15"/>
    <property type="match status" value="1"/>
</dbReference>
<dbReference type="InterPro" id="IPR027386">
    <property type="entry name" value="Rbsml_uL15_N"/>
</dbReference>
<dbReference type="InterPro" id="IPR030878">
    <property type="entry name" value="Ribosomal_uL15"/>
</dbReference>
<dbReference type="InterPro" id="IPR021131">
    <property type="entry name" value="Ribosomal_uL15/eL18"/>
</dbReference>
<dbReference type="InterPro" id="IPR036227">
    <property type="entry name" value="Ribosomal_uL15/eL18_sf"/>
</dbReference>
<dbReference type="PANTHER" id="PTHR11721">
    <property type="entry name" value="60S RIBOSOMAL PROTEIN L27A"/>
    <property type="match status" value="1"/>
</dbReference>
<dbReference type="PANTHER" id="PTHR11721:SF3">
    <property type="entry name" value="LARGE RIBOSOMAL SUBUNIT PROTEIN UL15"/>
    <property type="match status" value="1"/>
</dbReference>
<dbReference type="Pfam" id="PF00828">
    <property type="entry name" value="Ribosomal_L27A"/>
    <property type="match status" value="1"/>
</dbReference>
<dbReference type="SUPFAM" id="SSF52080">
    <property type="entry name" value="Ribosomal proteins L15p and L18e"/>
    <property type="match status" value="1"/>
</dbReference>
<sequence length="151" mass="17021">MRREKKSRAYRGSRTHGWGRVGQHRKSGSRGGRGLVGYHKHKWSWTVKYAPDWYGKHGFTRHPSLVVEYRTINVGQLDAEVEEFFRKGLASREGDAYVVDLTQLGFNKLTGSGQVRNKIIVKVPVATKRAISKIEAQGGRVEVAKTQEAGE</sequence>
<keyword id="KW-1185">Reference proteome</keyword>
<keyword id="KW-0687">Ribonucleoprotein</keyword>
<keyword id="KW-0689">Ribosomal protein</keyword>
<keyword id="KW-0694">RNA-binding</keyword>
<keyword id="KW-0699">rRNA-binding</keyword>
<evidence type="ECO:0000255" key="1">
    <source>
        <dbReference type="HAMAP-Rule" id="MF_01341"/>
    </source>
</evidence>
<evidence type="ECO:0000256" key="2">
    <source>
        <dbReference type="SAM" id="MobiDB-lite"/>
    </source>
</evidence>
<evidence type="ECO:0000305" key="3"/>
<name>RL15_THEPD</name>